<organism>
    <name type="scientific">Streptococcus pyogenes serotype M12 (strain MGAS9429)</name>
    <dbReference type="NCBI Taxonomy" id="370551"/>
    <lineage>
        <taxon>Bacteria</taxon>
        <taxon>Bacillati</taxon>
        <taxon>Bacillota</taxon>
        <taxon>Bacilli</taxon>
        <taxon>Lactobacillales</taxon>
        <taxon>Streptococcaceae</taxon>
        <taxon>Streptococcus</taxon>
    </lineage>
</organism>
<gene>
    <name evidence="1" type="primary">coaD</name>
    <name type="ordered locus">MGAS9429_Spy1261</name>
</gene>
<dbReference type="EC" id="2.7.7.3" evidence="1"/>
<dbReference type="EMBL" id="CP000259">
    <property type="protein sequence ID" value="ABF32448.1"/>
    <property type="molecule type" value="Genomic_DNA"/>
</dbReference>
<dbReference type="RefSeq" id="WP_002983821.1">
    <property type="nucleotide sequence ID" value="NC_008021.1"/>
</dbReference>
<dbReference type="SMR" id="Q1JKX1"/>
<dbReference type="GeneID" id="69900575"/>
<dbReference type="KEGG" id="spk:MGAS9429_Spy1261"/>
<dbReference type="HOGENOM" id="CLU_100149_0_1_9"/>
<dbReference type="UniPathway" id="UPA00241">
    <property type="reaction ID" value="UER00355"/>
</dbReference>
<dbReference type="Proteomes" id="UP000002433">
    <property type="component" value="Chromosome"/>
</dbReference>
<dbReference type="GO" id="GO:0005737">
    <property type="term" value="C:cytoplasm"/>
    <property type="evidence" value="ECO:0007669"/>
    <property type="project" value="UniProtKB-SubCell"/>
</dbReference>
<dbReference type="GO" id="GO:0005524">
    <property type="term" value="F:ATP binding"/>
    <property type="evidence" value="ECO:0007669"/>
    <property type="project" value="UniProtKB-KW"/>
</dbReference>
<dbReference type="GO" id="GO:0004595">
    <property type="term" value="F:pantetheine-phosphate adenylyltransferase activity"/>
    <property type="evidence" value="ECO:0007669"/>
    <property type="project" value="UniProtKB-UniRule"/>
</dbReference>
<dbReference type="GO" id="GO:0015937">
    <property type="term" value="P:coenzyme A biosynthetic process"/>
    <property type="evidence" value="ECO:0007669"/>
    <property type="project" value="UniProtKB-UniRule"/>
</dbReference>
<dbReference type="CDD" id="cd02163">
    <property type="entry name" value="PPAT"/>
    <property type="match status" value="1"/>
</dbReference>
<dbReference type="Gene3D" id="3.40.50.620">
    <property type="entry name" value="HUPs"/>
    <property type="match status" value="1"/>
</dbReference>
<dbReference type="HAMAP" id="MF_00151">
    <property type="entry name" value="PPAT_bact"/>
    <property type="match status" value="1"/>
</dbReference>
<dbReference type="InterPro" id="IPR004821">
    <property type="entry name" value="Cyt_trans-like"/>
</dbReference>
<dbReference type="InterPro" id="IPR001980">
    <property type="entry name" value="PPAT"/>
</dbReference>
<dbReference type="InterPro" id="IPR014729">
    <property type="entry name" value="Rossmann-like_a/b/a_fold"/>
</dbReference>
<dbReference type="NCBIfam" id="TIGR01510">
    <property type="entry name" value="coaD_prev_kdtB"/>
    <property type="match status" value="1"/>
</dbReference>
<dbReference type="NCBIfam" id="TIGR00125">
    <property type="entry name" value="cyt_tran_rel"/>
    <property type="match status" value="1"/>
</dbReference>
<dbReference type="PANTHER" id="PTHR21342">
    <property type="entry name" value="PHOSPHOPANTETHEINE ADENYLYLTRANSFERASE"/>
    <property type="match status" value="1"/>
</dbReference>
<dbReference type="PANTHER" id="PTHR21342:SF1">
    <property type="entry name" value="PHOSPHOPANTETHEINE ADENYLYLTRANSFERASE"/>
    <property type="match status" value="1"/>
</dbReference>
<dbReference type="Pfam" id="PF01467">
    <property type="entry name" value="CTP_transf_like"/>
    <property type="match status" value="1"/>
</dbReference>
<dbReference type="PRINTS" id="PR01020">
    <property type="entry name" value="LPSBIOSNTHSS"/>
</dbReference>
<dbReference type="SUPFAM" id="SSF52374">
    <property type="entry name" value="Nucleotidylyl transferase"/>
    <property type="match status" value="1"/>
</dbReference>
<comment type="function">
    <text evidence="1">Reversibly transfers an adenylyl group from ATP to 4'-phosphopantetheine, yielding dephospho-CoA (dPCoA) and pyrophosphate.</text>
</comment>
<comment type="catalytic activity">
    <reaction evidence="1">
        <text>(R)-4'-phosphopantetheine + ATP + H(+) = 3'-dephospho-CoA + diphosphate</text>
        <dbReference type="Rhea" id="RHEA:19801"/>
        <dbReference type="ChEBI" id="CHEBI:15378"/>
        <dbReference type="ChEBI" id="CHEBI:30616"/>
        <dbReference type="ChEBI" id="CHEBI:33019"/>
        <dbReference type="ChEBI" id="CHEBI:57328"/>
        <dbReference type="ChEBI" id="CHEBI:61723"/>
        <dbReference type="EC" id="2.7.7.3"/>
    </reaction>
</comment>
<comment type="cofactor">
    <cofactor evidence="1">
        <name>Mg(2+)</name>
        <dbReference type="ChEBI" id="CHEBI:18420"/>
    </cofactor>
</comment>
<comment type="pathway">
    <text evidence="1">Cofactor biosynthesis; coenzyme A biosynthesis; CoA from (R)-pantothenate: step 4/5.</text>
</comment>
<comment type="subunit">
    <text evidence="1">Homohexamer.</text>
</comment>
<comment type="subcellular location">
    <subcellularLocation>
        <location evidence="1">Cytoplasm</location>
    </subcellularLocation>
</comment>
<comment type="similarity">
    <text evidence="1">Belongs to the bacterial CoaD family.</text>
</comment>
<reference key="1">
    <citation type="journal article" date="2006" name="Proc. Natl. Acad. Sci. U.S.A.">
        <title>Molecular genetic anatomy of inter- and intraserotype variation in the human bacterial pathogen group A Streptococcus.</title>
        <authorList>
            <person name="Beres S.B."/>
            <person name="Richter E.W."/>
            <person name="Nagiec M.J."/>
            <person name="Sumby P."/>
            <person name="Porcella S.F."/>
            <person name="DeLeo F.R."/>
            <person name="Musser J.M."/>
        </authorList>
    </citation>
    <scope>NUCLEOTIDE SEQUENCE [LARGE SCALE GENOMIC DNA]</scope>
    <source>
        <strain>MGAS9429</strain>
    </source>
</reference>
<sequence length="163" mass="18629">MLTKIGLYTGSFDPVTNGHLDIVKRASGLFDQIYVGIFDNPTKKSYFKLEVRKAMLTQALADFTNVIVVTSHERLAIDVAKELRVTHLIRGLRNATDFEYEENLEYFNHLLAPNIETVYLISRNKWQALSSSRVRELIHFQSSLEGLVPQSVIAQVEKMNEKT</sequence>
<proteinExistence type="inferred from homology"/>
<name>COAD_STRPC</name>
<evidence type="ECO:0000255" key="1">
    <source>
        <dbReference type="HAMAP-Rule" id="MF_00151"/>
    </source>
</evidence>
<accession>Q1JKX1</accession>
<protein>
    <recommendedName>
        <fullName evidence="1">Phosphopantetheine adenylyltransferase</fullName>
        <ecNumber evidence="1">2.7.7.3</ecNumber>
    </recommendedName>
    <alternativeName>
        <fullName evidence="1">Dephospho-CoA pyrophosphorylase</fullName>
    </alternativeName>
    <alternativeName>
        <fullName evidence="1">Pantetheine-phosphate adenylyltransferase</fullName>
        <shortName evidence="1">PPAT</shortName>
    </alternativeName>
</protein>
<keyword id="KW-0067">ATP-binding</keyword>
<keyword id="KW-0173">Coenzyme A biosynthesis</keyword>
<keyword id="KW-0963">Cytoplasm</keyword>
<keyword id="KW-0460">Magnesium</keyword>
<keyword id="KW-0547">Nucleotide-binding</keyword>
<keyword id="KW-0548">Nucleotidyltransferase</keyword>
<keyword id="KW-0808">Transferase</keyword>
<feature type="chain" id="PRO_1000011252" description="Phosphopantetheine adenylyltransferase">
    <location>
        <begin position="1"/>
        <end position="163"/>
    </location>
</feature>
<feature type="binding site" evidence="1">
    <location>
        <begin position="11"/>
        <end position="12"/>
    </location>
    <ligand>
        <name>ATP</name>
        <dbReference type="ChEBI" id="CHEBI:30616"/>
    </ligand>
</feature>
<feature type="binding site" evidence="1">
    <location>
        <position position="11"/>
    </location>
    <ligand>
        <name>substrate</name>
    </ligand>
</feature>
<feature type="binding site" evidence="1">
    <location>
        <position position="19"/>
    </location>
    <ligand>
        <name>ATP</name>
        <dbReference type="ChEBI" id="CHEBI:30616"/>
    </ligand>
</feature>
<feature type="binding site" evidence="1">
    <location>
        <position position="43"/>
    </location>
    <ligand>
        <name>substrate</name>
    </ligand>
</feature>
<feature type="binding site" evidence="1">
    <location>
        <position position="76"/>
    </location>
    <ligand>
        <name>substrate</name>
    </ligand>
</feature>
<feature type="binding site" evidence="1">
    <location>
        <position position="90"/>
    </location>
    <ligand>
        <name>substrate</name>
    </ligand>
</feature>
<feature type="binding site" evidence="1">
    <location>
        <begin position="91"/>
        <end position="93"/>
    </location>
    <ligand>
        <name>ATP</name>
        <dbReference type="ChEBI" id="CHEBI:30616"/>
    </ligand>
</feature>
<feature type="binding site" evidence="1">
    <location>
        <position position="101"/>
    </location>
    <ligand>
        <name>ATP</name>
        <dbReference type="ChEBI" id="CHEBI:30616"/>
    </ligand>
</feature>
<feature type="binding site" evidence="1">
    <location>
        <begin position="126"/>
        <end position="132"/>
    </location>
    <ligand>
        <name>ATP</name>
        <dbReference type="ChEBI" id="CHEBI:30616"/>
    </ligand>
</feature>
<feature type="site" description="Transition state stabilizer" evidence="1">
    <location>
        <position position="19"/>
    </location>
</feature>